<reference key="1">
    <citation type="journal article" date="1999" name="Nucleic Acids Res.">
        <title>The DEAD box RNA helicase family in Arabidopsis thaliana.</title>
        <authorList>
            <person name="Aubourg S."/>
            <person name="Kreis M."/>
            <person name="Lecharny A."/>
        </authorList>
    </citation>
    <scope>NUCLEOTIDE SEQUENCE [MRNA]</scope>
    <source>
        <strain>cv. Columbia</strain>
    </source>
</reference>
<reference key="2">
    <citation type="journal article" date="1999" name="Nature">
        <title>Sequence and analysis of chromosome 4 of the plant Arabidopsis thaliana.</title>
        <authorList>
            <person name="Mayer K.F.X."/>
            <person name="Schueller C."/>
            <person name="Wambutt R."/>
            <person name="Murphy G."/>
            <person name="Volckaert G."/>
            <person name="Pohl T."/>
            <person name="Duesterhoeft A."/>
            <person name="Stiekema W."/>
            <person name="Entian K.-D."/>
            <person name="Terryn N."/>
            <person name="Harris B."/>
            <person name="Ansorge W."/>
            <person name="Brandt P."/>
            <person name="Grivell L.A."/>
            <person name="Rieger M."/>
            <person name="Weichselgartner M."/>
            <person name="de Simone V."/>
            <person name="Obermaier B."/>
            <person name="Mache R."/>
            <person name="Mueller M."/>
            <person name="Kreis M."/>
            <person name="Delseny M."/>
            <person name="Puigdomenech P."/>
            <person name="Watson M."/>
            <person name="Schmidtheini T."/>
            <person name="Reichert B."/>
            <person name="Portetelle D."/>
            <person name="Perez-Alonso M."/>
            <person name="Boutry M."/>
            <person name="Bancroft I."/>
            <person name="Vos P."/>
            <person name="Hoheisel J."/>
            <person name="Zimmermann W."/>
            <person name="Wedler H."/>
            <person name="Ridley P."/>
            <person name="Langham S.-A."/>
            <person name="McCullagh B."/>
            <person name="Bilham L."/>
            <person name="Robben J."/>
            <person name="van der Schueren J."/>
            <person name="Grymonprez B."/>
            <person name="Chuang Y.-J."/>
            <person name="Vandenbussche F."/>
            <person name="Braeken M."/>
            <person name="Weltjens I."/>
            <person name="Voet M."/>
            <person name="Bastiaens I."/>
            <person name="Aert R."/>
            <person name="Defoor E."/>
            <person name="Weitzenegger T."/>
            <person name="Bothe G."/>
            <person name="Ramsperger U."/>
            <person name="Hilbert H."/>
            <person name="Braun M."/>
            <person name="Holzer E."/>
            <person name="Brandt A."/>
            <person name="Peters S."/>
            <person name="van Staveren M."/>
            <person name="Dirkse W."/>
            <person name="Mooijman P."/>
            <person name="Klein Lankhorst R."/>
            <person name="Rose M."/>
            <person name="Hauf J."/>
            <person name="Koetter P."/>
            <person name="Berneiser S."/>
            <person name="Hempel S."/>
            <person name="Feldpausch M."/>
            <person name="Lamberth S."/>
            <person name="Van den Daele H."/>
            <person name="De Keyser A."/>
            <person name="Buysshaert C."/>
            <person name="Gielen J."/>
            <person name="Villarroel R."/>
            <person name="De Clercq R."/>
            <person name="van Montagu M."/>
            <person name="Rogers J."/>
            <person name="Cronin A."/>
            <person name="Quail M.A."/>
            <person name="Bray-Allen S."/>
            <person name="Clark L."/>
            <person name="Doggett J."/>
            <person name="Hall S."/>
            <person name="Kay M."/>
            <person name="Lennard N."/>
            <person name="McLay K."/>
            <person name="Mayes R."/>
            <person name="Pettett A."/>
            <person name="Rajandream M.A."/>
            <person name="Lyne M."/>
            <person name="Benes V."/>
            <person name="Rechmann S."/>
            <person name="Borkova D."/>
            <person name="Bloecker H."/>
            <person name="Scharfe M."/>
            <person name="Grimm M."/>
            <person name="Loehnert T.-H."/>
            <person name="Dose S."/>
            <person name="de Haan M."/>
            <person name="Maarse A.C."/>
            <person name="Schaefer M."/>
            <person name="Mueller-Auer S."/>
            <person name="Gabel C."/>
            <person name="Fuchs M."/>
            <person name="Fartmann B."/>
            <person name="Granderath K."/>
            <person name="Dauner D."/>
            <person name="Herzl A."/>
            <person name="Neumann S."/>
            <person name="Argiriou A."/>
            <person name="Vitale D."/>
            <person name="Liguori R."/>
            <person name="Piravandi E."/>
            <person name="Massenet O."/>
            <person name="Quigley F."/>
            <person name="Clabauld G."/>
            <person name="Muendlein A."/>
            <person name="Felber R."/>
            <person name="Schnabl S."/>
            <person name="Hiller R."/>
            <person name="Schmidt W."/>
            <person name="Lecharny A."/>
            <person name="Aubourg S."/>
            <person name="Chefdor F."/>
            <person name="Cooke R."/>
            <person name="Berger C."/>
            <person name="Monfort A."/>
            <person name="Casacuberta E."/>
            <person name="Gibbons T."/>
            <person name="Weber N."/>
            <person name="Vandenbol M."/>
            <person name="Bargues M."/>
            <person name="Terol J."/>
            <person name="Torres A."/>
            <person name="Perez-Perez A."/>
            <person name="Purnelle B."/>
            <person name="Bent E."/>
            <person name="Johnson S."/>
            <person name="Tacon D."/>
            <person name="Jesse T."/>
            <person name="Heijnen L."/>
            <person name="Schwarz S."/>
            <person name="Scholler P."/>
            <person name="Heber S."/>
            <person name="Francs P."/>
            <person name="Bielke C."/>
            <person name="Frishman D."/>
            <person name="Haase D."/>
            <person name="Lemcke K."/>
            <person name="Mewes H.-W."/>
            <person name="Stocker S."/>
            <person name="Zaccaria P."/>
            <person name="Bevan M."/>
            <person name="Wilson R.K."/>
            <person name="de la Bastide M."/>
            <person name="Habermann K."/>
            <person name="Parnell L."/>
            <person name="Dedhia N."/>
            <person name="Gnoj L."/>
            <person name="Schutz K."/>
            <person name="Huang E."/>
            <person name="Spiegel L."/>
            <person name="Sekhon M."/>
            <person name="Murray J."/>
            <person name="Sheet P."/>
            <person name="Cordes M."/>
            <person name="Abu-Threideh J."/>
            <person name="Stoneking T."/>
            <person name="Kalicki J."/>
            <person name="Graves T."/>
            <person name="Harmon G."/>
            <person name="Edwards J."/>
            <person name="Latreille P."/>
            <person name="Courtney L."/>
            <person name="Cloud J."/>
            <person name="Abbott A."/>
            <person name="Scott K."/>
            <person name="Johnson D."/>
            <person name="Minx P."/>
            <person name="Bentley D."/>
            <person name="Fulton B."/>
            <person name="Miller N."/>
            <person name="Greco T."/>
            <person name="Kemp K."/>
            <person name="Kramer J."/>
            <person name="Fulton L."/>
            <person name="Mardis E."/>
            <person name="Dante M."/>
            <person name="Pepin K."/>
            <person name="Hillier L.W."/>
            <person name="Nelson J."/>
            <person name="Spieth J."/>
            <person name="Ryan E."/>
            <person name="Andrews S."/>
            <person name="Geisel C."/>
            <person name="Layman D."/>
            <person name="Du H."/>
            <person name="Ali J."/>
            <person name="Berghoff A."/>
            <person name="Jones K."/>
            <person name="Drone K."/>
            <person name="Cotton M."/>
            <person name="Joshu C."/>
            <person name="Antonoiu B."/>
            <person name="Zidanic M."/>
            <person name="Strong C."/>
            <person name="Sun H."/>
            <person name="Lamar B."/>
            <person name="Yordan C."/>
            <person name="Ma P."/>
            <person name="Zhong J."/>
            <person name="Preston R."/>
            <person name="Vil D."/>
            <person name="Shekher M."/>
            <person name="Matero A."/>
            <person name="Shah R."/>
            <person name="Swaby I.K."/>
            <person name="O'Shaughnessy A."/>
            <person name="Rodriguez M."/>
            <person name="Hoffman J."/>
            <person name="Till S."/>
            <person name="Granat S."/>
            <person name="Shohdy N."/>
            <person name="Hasegawa A."/>
            <person name="Hameed A."/>
            <person name="Lodhi M."/>
            <person name="Johnson A."/>
            <person name="Chen E."/>
            <person name="Marra M.A."/>
            <person name="Martienssen R."/>
            <person name="McCombie W.R."/>
        </authorList>
    </citation>
    <scope>NUCLEOTIDE SEQUENCE [LARGE SCALE GENOMIC DNA]</scope>
    <source>
        <strain>cv. Columbia</strain>
    </source>
</reference>
<reference key="3">
    <citation type="journal article" date="2017" name="Plant J.">
        <title>Araport11: a complete reannotation of the Arabidopsis thaliana reference genome.</title>
        <authorList>
            <person name="Cheng C.Y."/>
            <person name="Krishnakumar V."/>
            <person name="Chan A.P."/>
            <person name="Thibaud-Nissen F."/>
            <person name="Schobel S."/>
            <person name="Town C.D."/>
        </authorList>
    </citation>
    <scope>GENOME REANNOTATION</scope>
    <source>
        <strain>cv. Columbia</strain>
    </source>
</reference>
<reference key="4">
    <citation type="journal article" date="2003" name="Science">
        <title>Empirical analysis of transcriptional activity in the Arabidopsis genome.</title>
        <authorList>
            <person name="Yamada K."/>
            <person name="Lim J."/>
            <person name="Dale J.M."/>
            <person name="Chen H."/>
            <person name="Shinn P."/>
            <person name="Palm C.J."/>
            <person name="Southwick A.M."/>
            <person name="Wu H.C."/>
            <person name="Kim C.J."/>
            <person name="Nguyen M."/>
            <person name="Pham P.K."/>
            <person name="Cheuk R.F."/>
            <person name="Karlin-Newmann G."/>
            <person name="Liu S.X."/>
            <person name="Lam B."/>
            <person name="Sakano H."/>
            <person name="Wu T."/>
            <person name="Yu G."/>
            <person name="Miranda M."/>
            <person name="Quach H.L."/>
            <person name="Tripp M."/>
            <person name="Chang C.H."/>
            <person name="Lee J.M."/>
            <person name="Toriumi M.J."/>
            <person name="Chan M.M."/>
            <person name="Tang C.C."/>
            <person name="Onodera C.S."/>
            <person name="Deng J.M."/>
            <person name="Akiyama K."/>
            <person name="Ansari Y."/>
            <person name="Arakawa T."/>
            <person name="Banh J."/>
            <person name="Banno F."/>
            <person name="Bowser L."/>
            <person name="Brooks S.Y."/>
            <person name="Carninci P."/>
            <person name="Chao Q."/>
            <person name="Choy N."/>
            <person name="Enju A."/>
            <person name="Goldsmith A.D."/>
            <person name="Gurjal M."/>
            <person name="Hansen N.F."/>
            <person name="Hayashizaki Y."/>
            <person name="Johnson-Hopson C."/>
            <person name="Hsuan V.W."/>
            <person name="Iida K."/>
            <person name="Karnes M."/>
            <person name="Khan S."/>
            <person name="Koesema E."/>
            <person name="Ishida J."/>
            <person name="Jiang P.X."/>
            <person name="Jones T."/>
            <person name="Kawai J."/>
            <person name="Kamiya A."/>
            <person name="Meyers C."/>
            <person name="Nakajima M."/>
            <person name="Narusaka M."/>
            <person name="Seki M."/>
            <person name="Sakurai T."/>
            <person name="Satou M."/>
            <person name="Tamse R."/>
            <person name="Vaysberg M."/>
            <person name="Wallender E.K."/>
            <person name="Wong C."/>
            <person name="Yamamura Y."/>
            <person name="Yuan S."/>
            <person name="Shinozaki K."/>
            <person name="Davis R.W."/>
            <person name="Theologis A."/>
            <person name="Ecker J.R."/>
        </authorList>
    </citation>
    <scope>NUCLEOTIDE SEQUENCE [LARGE SCALE MRNA]</scope>
    <source>
        <strain>cv. Columbia</strain>
    </source>
</reference>
<reference key="5">
    <citation type="journal article" date="2004" name="Plant Biotechnol. J.">
        <title>DEAD-box RNA helicases in Arabidopsis thaliana: establishing a link between quantitative expression, gene structure and evolution of a family of genes.</title>
        <authorList>
            <person name="Mingam A."/>
            <person name="Toffano-Nioche C."/>
            <person name="Brunaud V."/>
            <person name="Boudet N."/>
            <person name="Kreis M."/>
            <person name="Lecharny A."/>
        </authorList>
    </citation>
    <scope>GENE FAMILY</scope>
    <scope>NOMENCLATURE</scope>
</reference>
<reference key="6">
    <citation type="journal article" date="2013" name="PLoS ONE">
        <title>Genome-wide comparative in silico analysis of the RNA helicase gene family in Zea mays and Glycine max: a comparison with Arabidopsis and Oryza sativa.</title>
        <authorList>
            <person name="Xu R."/>
            <person name="Zhang S."/>
            <person name="Huang J."/>
            <person name="Zheng C."/>
        </authorList>
    </citation>
    <scope>GENE FAMILY</scope>
</reference>
<keyword id="KW-0067">ATP-binding</keyword>
<keyword id="KW-0963">Cytoplasm</keyword>
<keyword id="KW-0347">Helicase</keyword>
<keyword id="KW-0378">Hydrolase</keyword>
<keyword id="KW-0507">mRNA processing</keyword>
<keyword id="KW-0509">mRNA transport</keyword>
<keyword id="KW-0547">Nucleotide-binding</keyword>
<keyword id="KW-0597">Phosphoprotein</keyword>
<keyword id="KW-1185">Reference proteome</keyword>
<keyword id="KW-0694">RNA-binding</keyword>
<keyword id="KW-0810">Translation regulation</keyword>
<keyword id="KW-0813">Transport</keyword>
<organism>
    <name type="scientific">Arabidopsis thaliana</name>
    <name type="common">Mouse-ear cress</name>
    <dbReference type="NCBI Taxonomy" id="3702"/>
    <lineage>
        <taxon>Eukaryota</taxon>
        <taxon>Viridiplantae</taxon>
        <taxon>Streptophyta</taxon>
        <taxon>Embryophyta</taxon>
        <taxon>Tracheophyta</taxon>
        <taxon>Spermatophyta</taxon>
        <taxon>Magnoliopsida</taxon>
        <taxon>eudicotyledons</taxon>
        <taxon>Gunneridae</taxon>
        <taxon>Pentapetalae</taxon>
        <taxon>rosids</taxon>
        <taxon>malvids</taxon>
        <taxon>Brassicales</taxon>
        <taxon>Brassicaceae</taxon>
        <taxon>Camelineae</taxon>
        <taxon>Arabidopsis</taxon>
    </lineage>
</organism>
<comment type="function">
    <text evidence="1">ATP-dependent RNA helicase involved in mRNA turnover, and more specifically in mRNA decapping.</text>
</comment>
<comment type="catalytic activity">
    <reaction>
        <text>ATP + H2O = ADP + phosphate + H(+)</text>
        <dbReference type="Rhea" id="RHEA:13065"/>
        <dbReference type="ChEBI" id="CHEBI:15377"/>
        <dbReference type="ChEBI" id="CHEBI:15378"/>
        <dbReference type="ChEBI" id="CHEBI:30616"/>
        <dbReference type="ChEBI" id="CHEBI:43474"/>
        <dbReference type="ChEBI" id="CHEBI:456216"/>
        <dbReference type="EC" id="3.6.4.13"/>
    </reaction>
</comment>
<comment type="subcellular location">
    <subcellularLocation>
        <location evidence="1">Cytoplasm</location>
        <location evidence="1">P-body</location>
    </subcellularLocation>
    <text evidence="1">Is concentrated in several cytoplasmic foci called P bodies (or cytoplasmic processing bodies) which represent sites of mRNA decapping and 5' to 3' exonucleotidic decay.</text>
</comment>
<comment type="domain">
    <text>The Q motif is unique to and characteristic of the DEAD box family of RNA helicases and controls ATP binding and hydrolysis.</text>
</comment>
<comment type="similarity">
    <text evidence="6">Belongs to the DEAD box helicase family. DDX6/DHH1 subfamily.</text>
</comment>
<comment type="sequence caution" evidence="6">
    <conflict type="erroneous gene model prediction">
        <sequence resource="EMBL-CDS" id="AAC13628"/>
    </conflict>
</comment>
<comment type="sequence caution" evidence="6">
    <conflict type="erroneous gene model prediction">
        <sequence resource="EMBL-CDS" id="CAB80875"/>
    </conflict>
</comment>
<dbReference type="EC" id="3.6.4.13"/>
<dbReference type="EMBL" id="AJ010460">
    <property type="protein sequence ID" value="CAA09199.1"/>
    <property type="molecule type" value="mRNA"/>
</dbReference>
<dbReference type="EMBL" id="AF058919">
    <property type="protein sequence ID" value="AAC13628.1"/>
    <property type="status" value="ALT_SEQ"/>
    <property type="molecule type" value="Genomic_DNA"/>
</dbReference>
<dbReference type="EMBL" id="AL161472">
    <property type="protein sequence ID" value="CAB80875.1"/>
    <property type="status" value="ALT_SEQ"/>
    <property type="molecule type" value="Genomic_DNA"/>
</dbReference>
<dbReference type="EMBL" id="CP002687">
    <property type="protein sequence ID" value="AEE81915.1"/>
    <property type="molecule type" value="Genomic_DNA"/>
</dbReference>
<dbReference type="EMBL" id="CP002687">
    <property type="protein sequence ID" value="AEE81916.1"/>
    <property type="molecule type" value="Genomic_DNA"/>
</dbReference>
<dbReference type="EMBL" id="AY080837">
    <property type="protein sequence ID" value="AAL87312.1"/>
    <property type="molecule type" value="mRNA"/>
</dbReference>
<dbReference type="EMBL" id="AY113985">
    <property type="protein sequence ID" value="AAM45033.1"/>
    <property type="molecule type" value="mRNA"/>
</dbReference>
<dbReference type="PIR" id="T01230">
    <property type="entry name" value="T01230"/>
</dbReference>
<dbReference type="PIR" id="T51741">
    <property type="entry name" value="T51741"/>
</dbReference>
<dbReference type="RefSeq" id="NP_191975.2">
    <property type="nucleotide sequence ID" value="NM_116291.5"/>
</dbReference>
<dbReference type="RefSeq" id="NP_849535.1">
    <property type="nucleotide sequence ID" value="NM_179204.2"/>
</dbReference>
<dbReference type="SMR" id="Q8RXK6"/>
<dbReference type="BioGRID" id="13333">
    <property type="interactions" value="7"/>
</dbReference>
<dbReference type="FunCoup" id="Q8RXK6">
    <property type="interactions" value="5261"/>
</dbReference>
<dbReference type="STRING" id="3702.Q8RXK6"/>
<dbReference type="PaxDb" id="3702-AT4G00660.1"/>
<dbReference type="ProteomicsDB" id="236234"/>
<dbReference type="EnsemblPlants" id="AT4G00660.1">
    <property type="protein sequence ID" value="AT4G00660.1"/>
    <property type="gene ID" value="AT4G00660"/>
</dbReference>
<dbReference type="EnsemblPlants" id="AT4G00660.2">
    <property type="protein sequence ID" value="AT4G00660.2"/>
    <property type="gene ID" value="AT4G00660"/>
</dbReference>
<dbReference type="GeneID" id="828042"/>
<dbReference type="Gramene" id="AT4G00660.1">
    <property type="protein sequence ID" value="AT4G00660.1"/>
    <property type="gene ID" value="AT4G00660"/>
</dbReference>
<dbReference type="Gramene" id="AT4G00660.2">
    <property type="protein sequence ID" value="AT4G00660.2"/>
    <property type="gene ID" value="AT4G00660"/>
</dbReference>
<dbReference type="KEGG" id="ath:AT4G00660"/>
<dbReference type="Araport" id="AT4G00660"/>
<dbReference type="TAIR" id="AT4G00660">
    <property type="gene designation" value="RH8"/>
</dbReference>
<dbReference type="eggNOG" id="KOG0326">
    <property type="taxonomic scope" value="Eukaryota"/>
</dbReference>
<dbReference type="HOGENOM" id="CLU_003041_1_0_1"/>
<dbReference type="InParanoid" id="Q8RXK6"/>
<dbReference type="OMA" id="TYEDRHT"/>
<dbReference type="PhylomeDB" id="Q8RXK6"/>
<dbReference type="CD-CODE" id="4299E36E">
    <property type="entry name" value="Nucleolus"/>
</dbReference>
<dbReference type="PRO" id="PR:Q8RXK6"/>
<dbReference type="Proteomes" id="UP000006548">
    <property type="component" value="Chromosome 4"/>
</dbReference>
<dbReference type="ExpressionAtlas" id="Q8RXK6">
    <property type="expression patterns" value="baseline and differential"/>
</dbReference>
<dbReference type="GO" id="GO:0005829">
    <property type="term" value="C:cytosol"/>
    <property type="evidence" value="ECO:0007005"/>
    <property type="project" value="TAIR"/>
</dbReference>
<dbReference type="GO" id="GO:0000932">
    <property type="term" value="C:P-body"/>
    <property type="evidence" value="ECO:0007669"/>
    <property type="project" value="UniProtKB-SubCell"/>
</dbReference>
<dbReference type="GO" id="GO:0005524">
    <property type="term" value="F:ATP binding"/>
    <property type="evidence" value="ECO:0007669"/>
    <property type="project" value="UniProtKB-KW"/>
</dbReference>
<dbReference type="GO" id="GO:0016887">
    <property type="term" value="F:ATP hydrolysis activity"/>
    <property type="evidence" value="ECO:0007669"/>
    <property type="project" value="RHEA"/>
</dbReference>
<dbReference type="GO" id="GO:0003729">
    <property type="term" value="F:mRNA binding"/>
    <property type="evidence" value="ECO:0000314"/>
    <property type="project" value="TAIR"/>
</dbReference>
<dbReference type="GO" id="GO:0003724">
    <property type="term" value="F:RNA helicase activity"/>
    <property type="evidence" value="ECO:0007669"/>
    <property type="project" value="UniProtKB-EC"/>
</dbReference>
<dbReference type="GO" id="GO:0006397">
    <property type="term" value="P:mRNA processing"/>
    <property type="evidence" value="ECO:0007669"/>
    <property type="project" value="UniProtKB-KW"/>
</dbReference>
<dbReference type="GO" id="GO:0051028">
    <property type="term" value="P:mRNA transport"/>
    <property type="evidence" value="ECO:0007669"/>
    <property type="project" value="UniProtKB-KW"/>
</dbReference>
<dbReference type="GO" id="GO:0006417">
    <property type="term" value="P:regulation of translation"/>
    <property type="evidence" value="ECO:0007669"/>
    <property type="project" value="UniProtKB-KW"/>
</dbReference>
<dbReference type="GO" id="GO:0016032">
    <property type="term" value="P:viral process"/>
    <property type="evidence" value="ECO:0000315"/>
    <property type="project" value="TAIR"/>
</dbReference>
<dbReference type="CDD" id="cd17940">
    <property type="entry name" value="DEADc_DDX6"/>
    <property type="match status" value="1"/>
</dbReference>
<dbReference type="CDD" id="cd18787">
    <property type="entry name" value="SF2_C_DEAD"/>
    <property type="match status" value="1"/>
</dbReference>
<dbReference type="FunFam" id="3.40.50.300:FF:000114">
    <property type="entry name" value="ATP-dependent RNA helicase DDX6"/>
    <property type="match status" value="1"/>
</dbReference>
<dbReference type="FunFam" id="3.40.50.300:FF:000364">
    <property type="entry name" value="ATP-dependent RNA helicase DDX6"/>
    <property type="match status" value="1"/>
</dbReference>
<dbReference type="Gene3D" id="3.40.50.300">
    <property type="entry name" value="P-loop containing nucleotide triphosphate hydrolases"/>
    <property type="match status" value="2"/>
</dbReference>
<dbReference type="InterPro" id="IPR011545">
    <property type="entry name" value="DEAD/DEAH_box_helicase_dom"/>
</dbReference>
<dbReference type="InterPro" id="IPR014001">
    <property type="entry name" value="Helicase_ATP-bd"/>
</dbReference>
<dbReference type="InterPro" id="IPR001650">
    <property type="entry name" value="Helicase_C-like"/>
</dbReference>
<dbReference type="InterPro" id="IPR027417">
    <property type="entry name" value="P-loop_NTPase"/>
</dbReference>
<dbReference type="InterPro" id="IPR000629">
    <property type="entry name" value="RNA-helicase_DEAD-box_CS"/>
</dbReference>
<dbReference type="InterPro" id="IPR014014">
    <property type="entry name" value="RNA_helicase_DEAD_Q_motif"/>
</dbReference>
<dbReference type="PANTHER" id="PTHR47960">
    <property type="entry name" value="DEAD-BOX ATP-DEPENDENT RNA HELICASE 50"/>
    <property type="match status" value="1"/>
</dbReference>
<dbReference type="Pfam" id="PF00270">
    <property type="entry name" value="DEAD"/>
    <property type="match status" value="1"/>
</dbReference>
<dbReference type="Pfam" id="PF00271">
    <property type="entry name" value="Helicase_C"/>
    <property type="match status" value="1"/>
</dbReference>
<dbReference type="SMART" id="SM00487">
    <property type="entry name" value="DEXDc"/>
    <property type="match status" value="1"/>
</dbReference>
<dbReference type="SMART" id="SM00490">
    <property type="entry name" value="HELICc"/>
    <property type="match status" value="1"/>
</dbReference>
<dbReference type="SUPFAM" id="SSF52540">
    <property type="entry name" value="P-loop containing nucleoside triphosphate hydrolases"/>
    <property type="match status" value="1"/>
</dbReference>
<dbReference type="PROSITE" id="PS00039">
    <property type="entry name" value="DEAD_ATP_HELICASE"/>
    <property type="match status" value="1"/>
</dbReference>
<dbReference type="PROSITE" id="PS51192">
    <property type="entry name" value="HELICASE_ATP_BIND_1"/>
    <property type="match status" value="1"/>
</dbReference>
<dbReference type="PROSITE" id="PS51194">
    <property type="entry name" value="HELICASE_CTER"/>
    <property type="match status" value="1"/>
</dbReference>
<dbReference type="PROSITE" id="PS51195">
    <property type="entry name" value="Q_MOTIF"/>
    <property type="match status" value="1"/>
</dbReference>
<protein>
    <recommendedName>
        <fullName>DEAD-box ATP-dependent RNA helicase 8</fullName>
        <ecNumber>3.6.4.13</ecNumber>
    </recommendedName>
</protein>
<proteinExistence type="evidence at transcript level"/>
<evidence type="ECO:0000250" key="1"/>
<evidence type="ECO:0000250" key="2">
    <source>
        <dbReference type="UniProtKB" id="Q9CAI7"/>
    </source>
</evidence>
<evidence type="ECO:0000255" key="3">
    <source>
        <dbReference type="PROSITE-ProRule" id="PRU00541"/>
    </source>
</evidence>
<evidence type="ECO:0000255" key="4">
    <source>
        <dbReference type="PROSITE-ProRule" id="PRU00542"/>
    </source>
</evidence>
<evidence type="ECO:0000256" key="5">
    <source>
        <dbReference type="SAM" id="MobiDB-lite"/>
    </source>
</evidence>
<evidence type="ECO:0000305" key="6"/>
<accession>Q8RXK6</accession>
<accession>O65275</accession>
<accession>Q9ZS12</accession>
<gene>
    <name type="primary">RH8</name>
    <name type="ordered locus">At4g00660</name>
    <name type="ORF">F6N23.6</name>
</gene>
<feature type="chain" id="PRO_0000239150" description="DEAD-box ATP-dependent RNA helicase 8">
    <location>
        <begin position="1"/>
        <end position="505"/>
    </location>
</feature>
<feature type="domain" description="Helicase ATP-binding" evidence="3">
    <location>
        <begin position="162"/>
        <end position="332"/>
    </location>
</feature>
<feature type="domain" description="Helicase C-terminal" evidence="4">
    <location>
        <begin position="342"/>
        <end position="502"/>
    </location>
</feature>
<feature type="region of interest" description="Disordered" evidence="5">
    <location>
        <begin position="1"/>
        <end position="85"/>
    </location>
</feature>
<feature type="short sequence motif" description="Q motif">
    <location>
        <begin position="131"/>
        <end position="159"/>
    </location>
</feature>
<feature type="short sequence motif" description="DEAD box">
    <location>
        <begin position="280"/>
        <end position="283"/>
    </location>
</feature>
<feature type="compositionally biased region" description="Polar residues" evidence="5">
    <location>
        <begin position="20"/>
        <end position="31"/>
    </location>
</feature>
<feature type="compositionally biased region" description="Low complexity" evidence="5">
    <location>
        <begin position="43"/>
        <end position="71"/>
    </location>
</feature>
<feature type="binding site" evidence="3">
    <location>
        <begin position="175"/>
        <end position="182"/>
    </location>
    <ligand>
        <name>ATP</name>
        <dbReference type="ChEBI" id="CHEBI:30616"/>
    </ligand>
</feature>
<feature type="modified residue" description="Phosphothreonine" evidence="2">
    <location>
        <position position="237"/>
    </location>
</feature>
<feature type="sequence conflict" description="In Ref. 1; CAA09199." evidence="6" ref="1">
    <original>F</original>
    <variation>S</variation>
    <location>
        <position position="396"/>
    </location>
</feature>
<sequence>MNNRGRYPPGIGAGRGAFNPNPNYQSRSGYQQHPPPQYVQRGNYAQNHQQQFQQAPSQPHQYQQQQQQQQQWLRRGQIPGGNSNGDAVVEVEKTVQSEVIDPNSEDWKARLKLPAPDTRYRTEDVTATKGNEFEDYFLKRELLMGIYEKGFERPSPIQEESIPIALTGRDILARAKNGTGKTAAFCIPVLEKIDQDNNVIQAVIIVPTRELALQTSQVCKELGKHLKIQVMVTTGGTSLKDDIMRLYQPVHLLVGTPGRILDLTKKGVCVLKDCSVLVMDEADKLLSQEFQPSVEHLISFLPESRQILMFSATFPVTVKDFKDRFLTNPYVINLMDELTLKGITQFYAFVEERQKIHCLNTLFSKLQINQSIIFCNSVNRVELLAKKITELGYSCFYIHAKMLQDHRNRVFHDFRNGACRNLVCTDLFTRGIDIQAVNVVINFDFPKNAETYLHRVGRSGRFGHLGLAVNLITYEDRFNLYRIEQELGTEIKQIPPHIDQAIYCQ</sequence>
<name>RH8_ARATH</name>